<name>ACCD_PHOLL</name>
<protein>
    <recommendedName>
        <fullName evidence="1">Acetyl-coenzyme A carboxylase carboxyl transferase subunit beta</fullName>
        <shortName evidence="1">ACCase subunit beta</shortName>
        <shortName evidence="1">Acetyl-CoA carboxylase carboxyltransferase subunit beta</shortName>
        <ecNumber evidence="1">2.1.3.15</ecNumber>
    </recommendedName>
</protein>
<evidence type="ECO:0000255" key="1">
    <source>
        <dbReference type="HAMAP-Rule" id="MF_01395"/>
    </source>
</evidence>
<evidence type="ECO:0000255" key="2">
    <source>
        <dbReference type="PROSITE-ProRule" id="PRU01136"/>
    </source>
</evidence>
<sequence length="314" mass="34268">MSWIEKILNKSNITQTRKANIPEGVWTKCDSCSQVLYRAELERNLEVCPKCDHHMRISARTRLATFLDEGATTELGGELEPKDILKFRDSKKYKDRISAAQKQTQEKDALVVMKGTLSGMSVVAAAFEFAFMGGSMASVVGARFVRAVEQALADNCPLICFSSSGGARMQEALMSLMQMAKTSAALAKMQERGLPYISIMTDPTMGGVSASLAMLGDINIAEPKALIGFAGPRVIEQTVREKLPSGFQRSEFLLAKGAIDMIVRRPEMRDTLASLLSKLTHQSQPGTKPIVAEFVAEPADVEADIQISTNKEDA</sequence>
<gene>
    <name evidence="1" type="primary">accD</name>
    <name type="ordered locus">plu3171</name>
</gene>
<reference key="1">
    <citation type="journal article" date="2003" name="Nat. Biotechnol.">
        <title>The genome sequence of the entomopathogenic bacterium Photorhabdus luminescens.</title>
        <authorList>
            <person name="Duchaud E."/>
            <person name="Rusniok C."/>
            <person name="Frangeul L."/>
            <person name="Buchrieser C."/>
            <person name="Givaudan A."/>
            <person name="Taourit S."/>
            <person name="Bocs S."/>
            <person name="Boursaux-Eude C."/>
            <person name="Chandler M."/>
            <person name="Charles J.-F."/>
            <person name="Dassa E."/>
            <person name="Derose R."/>
            <person name="Derzelle S."/>
            <person name="Freyssinet G."/>
            <person name="Gaudriault S."/>
            <person name="Medigue C."/>
            <person name="Lanois A."/>
            <person name="Powell K."/>
            <person name="Siguier P."/>
            <person name="Vincent R."/>
            <person name="Wingate V."/>
            <person name="Zouine M."/>
            <person name="Glaser P."/>
            <person name="Boemare N."/>
            <person name="Danchin A."/>
            <person name="Kunst F."/>
        </authorList>
    </citation>
    <scope>NUCLEOTIDE SEQUENCE [LARGE SCALE GENOMIC DNA]</scope>
    <source>
        <strain>DSM 15139 / CIP 105565 / TT01</strain>
    </source>
</reference>
<feature type="chain" id="PRO_0000359016" description="Acetyl-coenzyme A carboxylase carboxyl transferase subunit beta">
    <location>
        <begin position="1"/>
        <end position="314"/>
    </location>
</feature>
<feature type="domain" description="CoA carboxyltransferase N-terminal" evidence="2">
    <location>
        <begin position="25"/>
        <end position="294"/>
    </location>
</feature>
<feature type="zinc finger region" description="C4-type" evidence="1">
    <location>
        <begin position="29"/>
        <end position="51"/>
    </location>
</feature>
<feature type="binding site" evidence="1">
    <location>
        <position position="29"/>
    </location>
    <ligand>
        <name>Zn(2+)</name>
        <dbReference type="ChEBI" id="CHEBI:29105"/>
    </ligand>
</feature>
<feature type="binding site" evidence="1">
    <location>
        <position position="32"/>
    </location>
    <ligand>
        <name>Zn(2+)</name>
        <dbReference type="ChEBI" id="CHEBI:29105"/>
    </ligand>
</feature>
<feature type="binding site" evidence="1">
    <location>
        <position position="48"/>
    </location>
    <ligand>
        <name>Zn(2+)</name>
        <dbReference type="ChEBI" id="CHEBI:29105"/>
    </ligand>
</feature>
<feature type="binding site" evidence="1">
    <location>
        <position position="51"/>
    </location>
    <ligand>
        <name>Zn(2+)</name>
        <dbReference type="ChEBI" id="CHEBI:29105"/>
    </ligand>
</feature>
<keyword id="KW-0067">ATP-binding</keyword>
<keyword id="KW-0963">Cytoplasm</keyword>
<keyword id="KW-0275">Fatty acid biosynthesis</keyword>
<keyword id="KW-0276">Fatty acid metabolism</keyword>
<keyword id="KW-0444">Lipid biosynthesis</keyword>
<keyword id="KW-0443">Lipid metabolism</keyword>
<keyword id="KW-0479">Metal-binding</keyword>
<keyword id="KW-0547">Nucleotide-binding</keyword>
<keyword id="KW-1185">Reference proteome</keyword>
<keyword id="KW-0808">Transferase</keyword>
<keyword id="KW-0862">Zinc</keyword>
<keyword id="KW-0863">Zinc-finger</keyword>
<comment type="function">
    <text evidence="1">Component of the acetyl coenzyme A carboxylase (ACC) complex. Biotin carboxylase (BC) catalyzes the carboxylation of biotin on its carrier protein (BCCP) and then the CO(2) group is transferred by the transcarboxylase to acetyl-CoA to form malonyl-CoA.</text>
</comment>
<comment type="catalytic activity">
    <reaction evidence="1">
        <text>N(6)-carboxybiotinyl-L-lysyl-[protein] + acetyl-CoA = N(6)-biotinyl-L-lysyl-[protein] + malonyl-CoA</text>
        <dbReference type="Rhea" id="RHEA:54728"/>
        <dbReference type="Rhea" id="RHEA-COMP:10505"/>
        <dbReference type="Rhea" id="RHEA-COMP:10506"/>
        <dbReference type="ChEBI" id="CHEBI:57288"/>
        <dbReference type="ChEBI" id="CHEBI:57384"/>
        <dbReference type="ChEBI" id="CHEBI:83144"/>
        <dbReference type="ChEBI" id="CHEBI:83145"/>
        <dbReference type="EC" id="2.1.3.15"/>
    </reaction>
</comment>
<comment type="cofactor">
    <cofactor evidence="1">
        <name>Zn(2+)</name>
        <dbReference type="ChEBI" id="CHEBI:29105"/>
    </cofactor>
    <text evidence="1">Binds 1 zinc ion per subunit.</text>
</comment>
<comment type="pathway">
    <text evidence="1">Lipid metabolism; malonyl-CoA biosynthesis; malonyl-CoA from acetyl-CoA: step 1/1.</text>
</comment>
<comment type="subunit">
    <text evidence="1">Acetyl-CoA carboxylase is a heterohexamer composed of biotin carboxyl carrier protein (AccB), biotin carboxylase (AccC) and two subunits each of ACCase subunit alpha (AccA) and ACCase subunit beta (AccD).</text>
</comment>
<comment type="subcellular location">
    <subcellularLocation>
        <location evidence="1">Cytoplasm</location>
    </subcellularLocation>
</comment>
<comment type="similarity">
    <text evidence="1">Belongs to the AccD/PCCB family.</text>
</comment>
<accession>Q7N2B5</accession>
<dbReference type="EC" id="2.1.3.15" evidence="1"/>
<dbReference type="EMBL" id="BX571869">
    <property type="protein sequence ID" value="CAE15545.1"/>
    <property type="molecule type" value="Genomic_DNA"/>
</dbReference>
<dbReference type="RefSeq" id="WP_011147379.1">
    <property type="nucleotide sequence ID" value="NC_005126.1"/>
</dbReference>
<dbReference type="SMR" id="Q7N2B5"/>
<dbReference type="STRING" id="243265.plu3171"/>
<dbReference type="GeneID" id="48849429"/>
<dbReference type="KEGG" id="plu:plu3171"/>
<dbReference type="eggNOG" id="COG0777">
    <property type="taxonomic scope" value="Bacteria"/>
</dbReference>
<dbReference type="HOGENOM" id="CLU_015486_1_0_6"/>
<dbReference type="OrthoDB" id="9772975at2"/>
<dbReference type="UniPathway" id="UPA00655">
    <property type="reaction ID" value="UER00711"/>
</dbReference>
<dbReference type="Proteomes" id="UP000002514">
    <property type="component" value="Chromosome"/>
</dbReference>
<dbReference type="GO" id="GO:0009329">
    <property type="term" value="C:acetate CoA-transferase complex"/>
    <property type="evidence" value="ECO:0007669"/>
    <property type="project" value="TreeGrafter"/>
</dbReference>
<dbReference type="GO" id="GO:0003989">
    <property type="term" value="F:acetyl-CoA carboxylase activity"/>
    <property type="evidence" value="ECO:0007669"/>
    <property type="project" value="InterPro"/>
</dbReference>
<dbReference type="GO" id="GO:0005524">
    <property type="term" value="F:ATP binding"/>
    <property type="evidence" value="ECO:0007669"/>
    <property type="project" value="UniProtKB-KW"/>
</dbReference>
<dbReference type="GO" id="GO:0016743">
    <property type="term" value="F:carboxyl- or carbamoyltransferase activity"/>
    <property type="evidence" value="ECO:0007669"/>
    <property type="project" value="UniProtKB-UniRule"/>
</dbReference>
<dbReference type="GO" id="GO:0008270">
    <property type="term" value="F:zinc ion binding"/>
    <property type="evidence" value="ECO:0007669"/>
    <property type="project" value="UniProtKB-UniRule"/>
</dbReference>
<dbReference type="GO" id="GO:0006633">
    <property type="term" value="P:fatty acid biosynthetic process"/>
    <property type="evidence" value="ECO:0007669"/>
    <property type="project" value="UniProtKB-KW"/>
</dbReference>
<dbReference type="GO" id="GO:2001295">
    <property type="term" value="P:malonyl-CoA biosynthetic process"/>
    <property type="evidence" value="ECO:0007669"/>
    <property type="project" value="UniProtKB-UniRule"/>
</dbReference>
<dbReference type="FunFam" id="3.90.226.10:FF:000013">
    <property type="entry name" value="Acetyl-coenzyme A carboxylase carboxyl transferase subunit beta"/>
    <property type="match status" value="1"/>
</dbReference>
<dbReference type="Gene3D" id="3.90.226.10">
    <property type="entry name" value="2-enoyl-CoA Hydratase, Chain A, domain 1"/>
    <property type="match status" value="1"/>
</dbReference>
<dbReference type="HAMAP" id="MF_01395">
    <property type="entry name" value="AcetylCoA_CT_beta"/>
    <property type="match status" value="1"/>
</dbReference>
<dbReference type="InterPro" id="IPR034733">
    <property type="entry name" value="AcCoA_carboxyl_beta"/>
</dbReference>
<dbReference type="InterPro" id="IPR000438">
    <property type="entry name" value="Acetyl_CoA_COase_Trfase_b_su"/>
</dbReference>
<dbReference type="InterPro" id="IPR029045">
    <property type="entry name" value="ClpP/crotonase-like_dom_sf"/>
</dbReference>
<dbReference type="InterPro" id="IPR011762">
    <property type="entry name" value="COA_CT_N"/>
</dbReference>
<dbReference type="InterPro" id="IPR041010">
    <property type="entry name" value="Znf-ACC"/>
</dbReference>
<dbReference type="NCBIfam" id="TIGR00515">
    <property type="entry name" value="accD"/>
    <property type="match status" value="1"/>
</dbReference>
<dbReference type="PANTHER" id="PTHR42995">
    <property type="entry name" value="ACETYL-COENZYME A CARBOXYLASE CARBOXYL TRANSFERASE SUBUNIT BETA, CHLOROPLASTIC"/>
    <property type="match status" value="1"/>
</dbReference>
<dbReference type="PANTHER" id="PTHR42995:SF5">
    <property type="entry name" value="ACETYL-COENZYME A CARBOXYLASE CARBOXYL TRANSFERASE SUBUNIT BETA, CHLOROPLASTIC"/>
    <property type="match status" value="1"/>
</dbReference>
<dbReference type="Pfam" id="PF01039">
    <property type="entry name" value="Carboxyl_trans"/>
    <property type="match status" value="1"/>
</dbReference>
<dbReference type="Pfam" id="PF17848">
    <property type="entry name" value="Zn_ribbon_ACC"/>
    <property type="match status" value="1"/>
</dbReference>
<dbReference type="PRINTS" id="PR01070">
    <property type="entry name" value="ACCCTRFRASEB"/>
</dbReference>
<dbReference type="SUPFAM" id="SSF52096">
    <property type="entry name" value="ClpP/crotonase"/>
    <property type="match status" value="1"/>
</dbReference>
<dbReference type="PROSITE" id="PS50980">
    <property type="entry name" value="COA_CT_NTER"/>
    <property type="match status" value="1"/>
</dbReference>
<organism>
    <name type="scientific">Photorhabdus laumondii subsp. laumondii (strain DSM 15139 / CIP 105565 / TT01)</name>
    <name type="common">Photorhabdus luminescens subsp. laumondii</name>
    <dbReference type="NCBI Taxonomy" id="243265"/>
    <lineage>
        <taxon>Bacteria</taxon>
        <taxon>Pseudomonadati</taxon>
        <taxon>Pseudomonadota</taxon>
        <taxon>Gammaproteobacteria</taxon>
        <taxon>Enterobacterales</taxon>
        <taxon>Morganellaceae</taxon>
        <taxon>Photorhabdus</taxon>
    </lineage>
</organism>
<proteinExistence type="inferred from homology"/>